<feature type="signal peptide" evidence="4">
    <location>
        <begin position="1"/>
        <end position="25"/>
    </location>
</feature>
<feature type="chain" id="PRO_0000016750" description="Mast/stem cell growth factor receptor Kit">
    <location>
        <begin position="26"/>
        <end position="977"/>
    </location>
</feature>
<feature type="topological domain" description="Extracellular" evidence="4">
    <location>
        <begin position="26"/>
        <end position="525"/>
    </location>
</feature>
<feature type="transmembrane region" description="Helical" evidence="4">
    <location>
        <begin position="526"/>
        <end position="546"/>
    </location>
</feature>
<feature type="topological domain" description="Cytoplasmic" evidence="4">
    <location>
        <begin position="547"/>
        <end position="977"/>
    </location>
</feature>
<feature type="domain" description="Ig-like C2-type 1">
    <location>
        <begin position="27"/>
        <end position="112"/>
    </location>
</feature>
<feature type="domain" description="Ig-like C2-type 2">
    <location>
        <begin position="121"/>
        <end position="205"/>
    </location>
</feature>
<feature type="domain" description="Ig-like C2-type 3">
    <location>
        <begin position="212"/>
        <end position="309"/>
    </location>
</feature>
<feature type="domain" description="Ig-like C2-type 4">
    <location>
        <begin position="318"/>
        <end position="411"/>
    </location>
</feature>
<feature type="domain" description="Ig-like C2-type 5">
    <location>
        <begin position="414"/>
        <end position="508"/>
    </location>
</feature>
<feature type="domain" description="Protein kinase" evidence="6">
    <location>
        <begin position="590"/>
        <end position="938"/>
    </location>
</feature>
<feature type="region of interest" description="Important for interaction with phosphotyrosine-binding proteins" evidence="1">
    <location>
        <begin position="569"/>
        <end position="571"/>
    </location>
</feature>
<feature type="active site" description="Proton acceptor" evidence="6 7">
    <location>
        <position position="793"/>
    </location>
</feature>
<feature type="binding site" evidence="1">
    <location>
        <position position="569"/>
    </location>
    <ligand>
        <name>Mg(2+)</name>
        <dbReference type="ChEBI" id="CHEBI:18420"/>
    </ligand>
</feature>
<feature type="binding site" evidence="6">
    <location>
        <begin position="597"/>
        <end position="604"/>
    </location>
    <ligand>
        <name>ATP</name>
        <dbReference type="ChEBI" id="CHEBI:30616"/>
    </ligand>
</feature>
<feature type="binding site" evidence="6">
    <location>
        <position position="624"/>
    </location>
    <ligand>
        <name>ATP</name>
        <dbReference type="ChEBI" id="CHEBI:30616"/>
    </ligand>
</feature>
<feature type="binding site" evidence="6">
    <location>
        <begin position="672"/>
        <end position="678"/>
    </location>
    <ligand>
        <name>ATP</name>
        <dbReference type="ChEBI" id="CHEBI:30616"/>
    </ligand>
</feature>
<feature type="binding site" evidence="6">
    <location>
        <position position="797"/>
    </location>
    <ligand>
        <name>ATP</name>
        <dbReference type="ChEBI" id="CHEBI:30616"/>
    </ligand>
</feature>
<feature type="binding site" evidence="1">
    <location>
        <position position="798"/>
    </location>
    <ligand>
        <name>Mg(2+)</name>
        <dbReference type="ChEBI" id="CHEBI:18420"/>
    </ligand>
</feature>
<feature type="binding site" evidence="1">
    <location>
        <position position="811"/>
    </location>
    <ligand>
        <name>Mg(2+)</name>
        <dbReference type="ChEBI" id="CHEBI:18420"/>
    </ligand>
</feature>
<feature type="site" description="Interaction with SH2B2/APS" evidence="1">
    <location>
        <position position="569"/>
    </location>
</feature>
<feature type="site" description="Important for interaction with phosphotyrosine-binding proteins" evidence="1">
    <location>
        <position position="937"/>
    </location>
</feature>
<feature type="site" description="Interaction with SH2B2/APS" evidence="1">
    <location>
        <position position="937"/>
    </location>
</feature>
<feature type="modified residue" description="Phosphotyrosine" evidence="3">
    <location>
        <position position="548"/>
    </location>
</feature>
<feature type="modified residue" description="Phosphotyrosine" evidence="3">
    <location>
        <position position="554"/>
    </location>
</feature>
<feature type="modified residue" description="Phosphotyrosine; by autocatalysis" evidence="3">
    <location>
        <position position="569"/>
    </location>
</feature>
<feature type="modified residue" description="Phosphotyrosine; by autocatalysis" evidence="3">
    <location>
        <position position="571"/>
    </location>
</feature>
<feature type="modified residue" description="Phosphotyrosine; by autocatalysis" evidence="3">
    <location>
        <position position="704"/>
    </location>
</feature>
<feature type="modified residue" description="Phosphotyrosine; by autocatalysis" evidence="3">
    <location>
        <position position="722"/>
    </location>
</feature>
<feature type="modified residue" description="Phosphotyrosine" evidence="3">
    <location>
        <position position="731"/>
    </location>
</feature>
<feature type="modified residue" description="Phosphoserine; by PKC/PRKCA" evidence="3">
    <location>
        <position position="742"/>
    </location>
</feature>
<feature type="modified residue" description="Phosphoserine; by PKC/PRKCA" evidence="3">
    <location>
        <position position="747"/>
    </location>
</feature>
<feature type="modified residue" description="Phosphoserine" evidence="3">
    <location>
        <position position="822"/>
    </location>
</feature>
<feature type="modified residue" description="Phosphotyrosine; by autocatalysis" evidence="3">
    <location>
        <position position="824"/>
    </location>
</feature>
<feature type="modified residue" description="Phosphoserine" evidence="3">
    <location>
        <position position="892"/>
    </location>
</feature>
<feature type="modified residue" description="Phosphotyrosine" evidence="3">
    <location>
        <position position="901"/>
    </location>
</feature>
<feature type="modified residue" description="Phosphotyrosine; by autocatalysis" evidence="3">
    <location>
        <position position="937"/>
    </location>
</feature>
<feature type="modified residue" description="Phosphoserine" evidence="3">
    <location>
        <position position="960"/>
    </location>
</feature>
<feature type="glycosylation site" description="N-linked (GlcNAc...) asparagine" evidence="4">
    <location>
        <position position="94"/>
    </location>
</feature>
<feature type="glycosylation site" description="N-linked (GlcNAc...) asparagine" evidence="4">
    <location>
        <position position="130"/>
    </location>
</feature>
<feature type="glycosylation site" description="N-linked (GlcNAc...) asparagine" evidence="4">
    <location>
        <position position="145"/>
    </location>
</feature>
<feature type="glycosylation site" description="N-linked (GlcNAc...) asparagine" evidence="4">
    <location>
        <position position="284"/>
    </location>
</feature>
<feature type="glycosylation site" description="N-linked (GlcNAc...) asparagine" evidence="4">
    <location>
        <position position="294"/>
    </location>
</feature>
<feature type="glycosylation site" description="N-linked (GlcNAc...) asparagine" evidence="4">
    <location>
        <position position="301"/>
    </location>
</feature>
<feature type="glycosylation site" description="N-linked (GlcNAc...) asparagine" evidence="4">
    <location>
        <position position="321"/>
    </location>
</feature>
<feature type="glycosylation site" description="N-linked (GlcNAc...) asparagine" evidence="4">
    <location>
        <position position="353"/>
    </location>
</feature>
<feature type="glycosylation site" description="N-linked (GlcNAc...) asparagine" evidence="4">
    <location>
        <position position="368"/>
    </location>
</feature>
<feature type="glycosylation site" description="N-linked (GlcNAc...) asparagine" evidence="4">
    <location>
        <position position="401"/>
    </location>
</feature>
<feature type="glycosylation site" description="N-linked (GlcNAc...) asparagine" evidence="4">
    <location>
        <position position="464"/>
    </location>
</feature>
<feature type="glycosylation site" description="N-linked (GlcNAc...) asparagine" evidence="4">
    <location>
        <position position="487"/>
    </location>
</feature>
<feature type="disulfide bond" evidence="5">
    <location>
        <begin position="58"/>
        <end position="97"/>
    </location>
</feature>
<feature type="disulfide bond" evidence="5">
    <location>
        <begin position="136"/>
        <end position="186"/>
    </location>
</feature>
<feature type="disulfide bond" evidence="5">
    <location>
        <begin position="151"/>
        <end position="183"/>
    </location>
</feature>
<feature type="disulfide bond" evidence="5">
    <location>
        <begin position="233"/>
        <end position="291"/>
    </location>
</feature>
<feature type="disulfide bond" evidence="5">
    <location>
        <begin position="429"/>
        <end position="492"/>
    </location>
</feature>
<evidence type="ECO:0000250" key="1"/>
<evidence type="ECO:0000250" key="2">
    <source>
        <dbReference type="UniProtKB" id="P05532"/>
    </source>
</evidence>
<evidence type="ECO:0000250" key="3">
    <source>
        <dbReference type="UniProtKB" id="P10721"/>
    </source>
</evidence>
<evidence type="ECO:0000255" key="4"/>
<evidence type="ECO:0000255" key="5">
    <source>
        <dbReference type="PROSITE-ProRule" id="PRU00114"/>
    </source>
</evidence>
<evidence type="ECO:0000255" key="6">
    <source>
        <dbReference type="PROSITE-ProRule" id="PRU00159"/>
    </source>
</evidence>
<evidence type="ECO:0000255" key="7">
    <source>
        <dbReference type="PROSITE-ProRule" id="PRU10028"/>
    </source>
</evidence>
<sequence>MRGARGAWDFLFVLLLLLLVQTGSSQPSVSPGELSLPSIHPAKSELIVSVGDEIRLLCTDPGFVKWTFEILGQLSEKTNPEWITEKAEATNTGNYTCTNKGGLSSSIYVFVRDPEKLFLIDLPLYGKEENDTLVRCPLTDPEVTNYSLTGCEGKPLPKDLTFVADPKAGITIRNVKREYHRLCLHCSANQRGKSMLSKKFTLKVRAAIKAVPVVSVSKTSYLLREGEEFAVTCLIKDVSSSVDSMWIKENSQQTKAQTKKNSWHQGDFSYLRQERLTISSARVNDSGVFMCYANNTFGSANVTTTLEVVDKGFINIFPMMNTTVFVNDGENVDLVVEYEAYPKPVHRQWIYMNRTSTDKWDDYPKSENESNIRYVNELHLTRLKGTEGGTYTFHVSNSDVNSSVTFNVYVNTKPEILTHDRLVNGMLQCVAAGFPEPTIDWYFCPGTEQRCSVPVGPVDVQIQNSSVSPFGKLVVYSTIDDSTFKHNGTVECRAYNDVGKSSASFNFAFKGNSKEQIHAHTLFTPLLIGFVIAAGLMCIFVMILTYKYLQKPMYEVQWKVVEEINGNNYVYIDPTQLPYDHKWEFPRNRLSFGKTLGAGAFGKVVEATAYGLIKSDAAMTVAVKMLKPSAHLTEREALMSELKVLSYLGNHMNIVNLLGACTIGGPTLVITEYCCYGDLLNFLRRKRDSFICSKQEDHAEVALYKNLLHSKESSCNDSTNEYMDMKPGVSYVVPTKADKRRSARIGSYIERDVTPAIMEDDELALDLEDLLSFSYQVAKGMAFLASKNCIHRDLAARNILLTHGRITKICDFGLARDIKNDSNYVVKGNARLPVKWMAPESIFNCVYTFESDVWSYGIFLWELFSLGSSPYPGMPVDSKFYKMIKEGFRMLSPEHAPAEMYDIMKTCWDADPLKRPTFKQIVQLIEKQISESTNHIYSNLANCSPHRENPAVDHSVRINSVGSSASSTQPLLVHEDV</sequence>
<dbReference type="EC" id="2.7.10.1"/>
<dbReference type="EMBL" id="D16680">
    <property type="protein sequence ID" value="BAA04084.1"/>
    <property type="molecule type" value="mRNA"/>
</dbReference>
<dbReference type="SMR" id="P43481"/>
<dbReference type="FunCoup" id="P43481">
    <property type="interactions" value="345"/>
</dbReference>
<dbReference type="STRING" id="9913.ENSBTAP00000003498"/>
<dbReference type="GlyCosmos" id="P43481">
    <property type="glycosylation" value="12 sites, No reported glycans"/>
</dbReference>
<dbReference type="GlyGen" id="P43481">
    <property type="glycosylation" value="12 sites"/>
</dbReference>
<dbReference type="PaxDb" id="9913-ENSBTAP00000003498"/>
<dbReference type="eggNOG" id="KOG0200">
    <property type="taxonomic scope" value="Eukaryota"/>
</dbReference>
<dbReference type="HOGENOM" id="CLU_000288_49_0_1"/>
<dbReference type="InParanoid" id="P43481"/>
<dbReference type="OrthoDB" id="6077854at2759"/>
<dbReference type="TreeFam" id="TF325768"/>
<dbReference type="BRENDA" id="2.7.10.1">
    <property type="organism ID" value="908"/>
</dbReference>
<dbReference type="Proteomes" id="UP000009136">
    <property type="component" value="Unplaced"/>
</dbReference>
<dbReference type="GO" id="GO:0005886">
    <property type="term" value="C:plasma membrane"/>
    <property type="evidence" value="ECO:0000318"/>
    <property type="project" value="GO_Central"/>
</dbReference>
<dbReference type="GO" id="GO:0043235">
    <property type="term" value="C:receptor complex"/>
    <property type="evidence" value="ECO:0000318"/>
    <property type="project" value="GO_Central"/>
</dbReference>
<dbReference type="GO" id="GO:0005524">
    <property type="term" value="F:ATP binding"/>
    <property type="evidence" value="ECO:0007669"/>
    <property type="project" value="UniProtKB-KW"/>
</dbReference>
<dbReference type="GO" id="GO:0019955">
    <property type="term" value="F:cytokine binding"/>
    <property type="evidence" value="ECO:0000250"/>
    <property type="project" value="UniProtKB"/>
</dbReference>
<dbReference type="GO" id="GO:0019838">
    <property type="term" value="F:growth factor binding"/>
    <property type="evidence" value="ECO:0000318"/>
    <property type="project" value="GO_Central"/>
</dbReference>
<dbReference type="GO" id="GO:0046872">
    <property type="term" value="F:metal ion binding"/>
    <property type="evidence" value="ECO:0007669"/>
    <property type="project" value="UniProtKB-KW"/>
</dbReference>
<dbReference type="GO" id="GO:0004714">
    <property type="term" value="F:transmembrane receptor protein tyrosine kinase activity"/>
    <property type="evidence" value="ECO:0000250"/>
    <property type="project" value="UniProtKB"/>
</dbReference>
<dbReference type="GO" id="GO:0030036">
    <property type="term" value="P:actin cytoskeleton organization"/>
    <property type="evidence" value="ECO:0000250"/>
    <property type="project" value="UniProtKB"/>
</dbReference>
<dbReference type="GO" id="GO:0030183">
    <property type="term" value="P:B cell differentiation"/>
    <property type="evidence" value="ECO:0000318"/>
    <property type="project" value="GO_Central"/>
</dbReference>
<dbReference type="GO" id="GO:0060326">
    <property type="term" value="P:cell chemotaxis"/>
    <property type="evidence" value="ECO:0000250"/>
    <property type="project" value="UniProtKB"/>
</dbReference>
<dbReference type="GO" id="GO:0016477">
    <property type="term" value="P:cell migration"/>
    <property type="evidence" value="ECO:0000318"/>
    <property type="project" value="GO_Central"/>
</dbReference>
<dbReference type="GO" id="GO:0019221">
    <property type="term" value="P:cytokine-mediated signaling pathway"/>
    <property type="evidence" value="ECO:0000250"/>
    <property type="project" value="UniProtKB"/>
</dbReference>
<dbReference type="GO" id="GO:0050910">
    <property type="term" value="P:detection of mechanical stimulus involved in sensory perception of sound"/>
    <property type="evidence" value="ECO:0000250"/>
    <property type="project" value="UniProtKB"/>
</dbReference>
<dbReference type="GO" id="GO:0048565">
    <property type="term" value="P:digestive tract development"/>
    <property type="evidence" value="ECO:0000250"/>
    <property type="project" value="UniProtKB"/>
</dbReference>
<dbReference type="GO" id="GO:0035162">
    <property type="term" value="P:embryonic hemopoiesis"/>
    <property type="evidence" value="ECO:0000250"/>
    <property type="project" value="UniProtKB"/>
</dbReference>
<dbReference type="GO" id="GO:0030218">
    <property type="term" value="P:erythrocyte differentiation"/>
    <property type="evidence" value="ECO:0000250"/>
    <property type="project" value="UniProtKB"/>
</dbReference>
<dbReference type="GO" id="GO:0038162">
    <property type="term" value="P:erythropoietin-mediated signaling pathway"/>
    <property type="evidence" value="ECO:0000250"/>
    <property type="project" value="UniProtKB"/>
</dbReference>
<dbReference type="GO" id="GO:0038093">
    <property type="term" value="P:Fc receptor signaling pathway"/>
    <property type="evidence" value="ECO:0000250"/>
    <property type="project" value="UniProtKB"/>
</dbReference>
<dbReference type="GO" id="GO:0002244">
    <property type="term" value="P:hematopoietic progenitor cell differentiation"/>
    <property type="evidence" value="ECO:0000318"/>
    <property type="project" value="GO_Central"/>
</dbReference>
<dbReference type="GO" id="GO:0002327">
    <property type="term" value="P:immature B cell differentiation"/>
    <property type="evidence" value="ECO:0000250"/>
    <property type="project" value="UniProtKB"/>
</dbReference>
<dbReference type="GO" id="GO:0006954">
    <property type="term" value="P:inflammatory response"/>
    <property type="evidence" value="ECO:0000250"/>
    <property type="project" value="UniProtKB"/>
</dbReference>
<dbReference type="GO" id="GO:0038109">
    <property type="term" value="P:Kit signaling pathway"/>
    <property type="evidence" value="ECO:0000250"/>
    <property type="project" value="UniProtKB"/>
</dbReference>
<dbReference type="GO" id="GO:0030032">
    <property type="term" value="P:lamellipodium assembly"/>
    <property type="evidence" value="ECO:0000250"/>
    <property type="project" value="UniProtKB"/>
</dbReference>
<dbReference type="GO" id="GO:0043303">
    <property type="term" value="P:mast cell degranulation"/>
    <property type="evidence" value="ECO:0000250"/>
    <property type="project" value="UniProtKB"/>
</dbReference>
<dbReference type="GO" id="GO:0060374">
    <property type="term" value="P:mast cell differentiation"/>
    <property type="evidence" value="ECO:0000250"/>
    <property type="project" value="UniProtKB"/>
</dbReference>
<dbReference type="GO" id="GO:0035855">
    <property type="term" value="P:megakaryocyte development"/>
    <property type="evidence" value="ECO:0000250"/>
    <property type="project" value="UniProtKB"/>
</dbReference>
<dbReference type="GO" id="GO:0097326">
    <property type="term" value="P:melanocyte adhesion"/>
    <property type="evidence" value="ECO:0000250"/>
    <property type="project" value="UniProtKB"/>
</dbReference>
<dbReference type="GO" id="GO:0030318">
    <property type="term" value="P:melanocyte differentiation"/>
    <property type="evidence" value="ECO:0000250"/>
    <property type="project" value="UniProtKB"/>
</dbReference>
<dbReference type="GO" id="GO:0097324">
    <property type="term" value="P:melanocyte migration"/>
    <property type="evidence" value="ECO:0000250"/>
    <property type="project" value="UniProtKB"/>
</dbReference>
<dbReference type="GO" id="GO:0001541">
    <property type="term" value="P:ovarian follicle development"/>
    <property type="evidence" value="ECO:0000250"/>
    <property type="project" value="UniProtKB"/>
</dbReference>
<dbReference type="GO" id="GO:0043473">
    <property type="term" value="P:pigmentation"/>
    <property type="evidence" value="ECO:0000250"/>
    <property type="project" value="UniProtKB"/>
</dbReference>
<dbReference type="GO" id="GO:0030335">
    <property type="term" value="P:positive regulation of cell migration"/>
    <property type="evidence" value="ECO:0000318"/>
    <property type="project" value="GO_Central"/>
</dbReference>
<dbReference type="GO" id="GO:0008284">
    <property type="term" value="P:positive regulation of cell population proliferation"/>
    <property type="evidence" value="ECO:0000318"/>
    <property type="project" value="GO_Central"/>
</dbReference>
<dbReference type="GO" id="GO:0002732">
    <property type="term" value="P:positive regulation of dendritic cell cytokine production"/>
    <property type="evidence" value="ECO:0000250"/>
    <property type="project" value="UniProtKB"/>
</dbReference>
<dbReference type="GO" id="GO:0032765">
    <property type="term" value="P:positive regulation of mast cell cytokine production"/>
    <property type="evidence" value="ECO:0000250"/>
    <property type="project" value="UniProtKB"/>
</dbReference>
<dbReference type="GO" id="GO:0046427">
    <property type="term" value="P:positive regulation of receptor signaling pathway via JAK-STAT"/>
    <property type="evidence" value="ECO:0000318"/>
    <property type="project" value="GO_Central"/>
</dbReference>
<dbReference type="GO" id="GO:0008360">
    <property type="term" value="P:regulation of cell shape"/>
    <property type="evidence" value="ECO:0000250"/>
    <property type="project" value="UniProtKB"/>
</dbReference>
<dbReference type="GO" id="GO:0007283">
    <property type="term" value="P:spermatogenesis"/>
    <property type="evidence" value="ECO:0000250"/>
    <property type="project" value="UniProtKB"/>
</dbReference>
<dbReference type="GO" id="GO:0048863">
    <property type="term" value="P:stem cell differentiation"/>
    <property type="evidence" value="ECO:0000250"/>
    <property type="project" value="UniProtKB"/>
</dbReference>
<dbReference type="GO" id="GO:0030217">
    <property type="term" value="P:T cell differentiation"/>
    <property type="evidence" value="ECO:0000250"/>
    <property type="project" value="UniProtKB"/>
</dbReference>
<dbReference type="CDD" id="cd00096">
    <property type="entry name" value="Ig"/>
    <property type="match status" value="1"/>
</dbReference>
<dbReference type="CDD" id="cd05860">
    <property type="entry name" value="IgI_4_SCFR"/>
    <property type="match status" value="1"/>
</dbReference>
<dbReference type="CDD" id="cd05104">
    <property type="entry name" value="PTKc_Kit"/>
    <property type="match status" value="1"/>
</dbReference>
<dbReference type="FunFam" id="1.10.510.10:FF:000177">
    <property type="entry name" value="Mast/stem cell growth factor receptor"/>
    <property type="match status" value="1"/>
</dbReference>
<dbReference type="FunFam" id="2.60.40.10:FF:000422">
    <property type="entry name" value="Mast/stem cell growth factor receptor"/>
    <property type="match status" value="1"/>
</dbReference>
<dbReference type="FunFam" id="2.60.40.10:FF:000429">
    <property type="entry name" value="Mast/stem cell growth factor receptor"/>
    <property type="match status" value="1"/>
</dbReference>
<dbReference type="FunFam" id="2.60.40.10:FF:000469">
    <property type="entry name" value="Mast/stem cell growth factor receptor"/>
    <property type="match status" value="1"/>
</dbReference>
<dbReference type="FunFam" id="2.60.40.10:FF:000544">
    <property type="entry name" value="Mast/stem cell growth factor receptor"/>
    <property type="match status" value="1"/>
</dbReference>
<dbReference type="FunFam" id="2.60.40.10:FF:000815">
    <property type="entry name" value="Mast/stem cell growth factor receptor"/>
    <property type="match status" value="1"/>
</dbReference>
<dbReference type="FunFam" id="3.30.200.20:FF:000025">
    <property type="entry name" value="Platelet-derived growth factor receptor alpha"/>
    <property type="match status" value="1"/>
</dbReference>
<dbReference type="Gene3D" id="2.60.40.10">
    <property type="entry name" value="Immunoglobulins"/>
    <property type="match status" value="5"/>
</dbReference>
<dbReference type="Gene3D" id="3.30.200.20">
    <property type="entry name" value="Phosphorylase Kinase, domain 1"/>
    <property type="match status" value="1"/>
</dbReference>
<dbReference type="Gene3D" id="1.10.510.10">
    <property type="entry name" value="Transferase(Phosphotransferase) domain 1"/>
    <property type="match status" value="1"/>
</dbReference>
<dbReference type="InterPro" id="IPR007110">
    <property type="entry name" value="Ig-like_dom"/>
</dbReference>
<dbReference type="InterPro" id="IPR036179">
    <property type="entry name" value="Ig-like_dom_sf"/>
</dbReference>
<dbReference type="InterPro" id="IPR013783">
    <property type="entry name" value="Ig-like_fold"/>
</dbReference>
<dbReference type="InterPro" id="IPR003599">
    <property type="entry name" value="Ig_sub"/>
</dbReference>
<dbReference type="InterPro" id="IPR003598">
    <property type="entry name" value="Ig_sub2"/>
</dbReference>
<dbReference type="InterPro" id="IPR013151">
    <property type="entry name" value="Immunoglobulin_dom"/>
</dbReference>
<dbReference type="InterPro" id="IPR011009">
    <property type="entry name" value="Kinase-like_dom_sf"/>
</dbReference>
<dbReference type="InterPro" id="IPR000719">
    <property type="entry name" value="Prot_kinase_dom"/>
</dbReference>
<dbReference type="InterPro" id="IPR017441">
    <property type="entry name" value="Protein_kinase_ATP_BS"/>
</dbReference>
<dbReference type="InterPro" id="IPR050122">
    <property type="entry name" value="RTK"/>
</dbReference>
<dbReference type="InterPro" id="IPR027263">
    <property type="entry name" value="SCGF_receptor"/>
</dbReference>
<dbReference type="InterPro" id="IPR001245">
    <property type="entry name" value="Ser-Thr/Tyr_kinase_cat_dom"/>
</dbReference>
<dbReference type="InterPro" id="IPR008266">
    <property type="entry name" value="Tyr_kinase_AS"/>
</dbReference>
<dbReference type="InterPro" id="IPR020635">
    <property type="entry name" value="Tyr_kinase_cat_dom"/>
</dbReference>
<dbReference type="InterPro" id="IPR001824">
    <property type="entry name" value="Tyr_kinase_rcpt_3_CS"/>
</dbReference>
<dbReference type="PANTHER" id="PTHR24416:SF46">
    <property type="entry name" value="MAST_STEM CELL GROWTH FACTOR RECEPTOR KIT"/>
    <property type="match status" value="1"/>
</dbReference>
<dbReference type="PANTHER" id="PTHR24416">
    <property type="entry name" value="TYROSINE-PROTEIN KINASE RECEPTOR"/>
    <property type="match status" value="1"/>
</dbReference>
<dbReference type="Pfam" id="PF00047">
    <property type="entry name" value="ig"/>
    <property type="match status" value="1"/>
</dbReference>
<dbReference type="Pfam" id="PF07714">
    <property type="entry name" value="PK_Tyr_Ser-Thr"/>
    <property type="match status" value="1"/>
</dbReference>
<dbReference type="PIRSF" id="PIRSF500951">
    <property type="entry name" value="SCGF_recepter"/>
    <property type="match status" value="1"/>
</dbReference>
<dbReference type="PIRSF" id="PIRSF000615">
    <property type="entry name" value="TyrPK_CSF1-R"/>
    <property type="match status" value="1"/>
</dbReference>
<dbReference type="SMART" id="SM00409">
    <property type="entry name" value="IG"/>
    <property type="match status" value="4"/>
</dbReference>
<dbReference type="SMART" id="SM00408">
    <property type="entry name" value="IGc2"/>
    <property type="match status" value="2"/>
</dbReference>
<dbReference type="SMART" id="SM00219">
    <property type="entry name" value="TyrKc"/>
    <property type="match status" value="1"/>
</dbReference>
<dbReference type="SUPFAM" id="SSF48726">
    <property type="entry name" value="Immunoglobulin"/>
    <property type="match status" value="3"/>
</dbReference>
<dbReference type="SUPFAM" id="SSF56112">
    <property type="entry name" value="Protein kinase-like (PK-like)"/>
    <property type="match status" value="1"/>
</dbReference>
<dbReference type="PROSITE" id="PS50835">
    <property type="entry name" value="IG_LIKE"/>
    <property type="match status" value="2"/>
</dbReference>
<dbReference type="PROSITE" id="PS00107">
    <property type="entry name" value="PROTEIN_KINASE_ATP"/>
    <property type="match status" value="1"/>
</dbReference>
<dbReference type="PROSITE" id="PS50011">
    <property type="entry name" value="PROTEIN_KINASE_DOM"/>
    <property type="match status" value="1"/>
</dbReference>
<dbReference type="PROSITE" id="PS00109">
    <property type="entry name" value="PROTEIN_KINASE_TYR"/>
    <property type="match status" value="1"/>
</dbReference>
<dbReference type="PROSITE" id="PS00240">
    <property type="entry name" value="RECEPTOR_TYR_KIN_III"/>
    <property type="match status" value="1"/>
</dbReference>
<proteinExistence type="evidence at transcript level"/>
<reference key="1">
    <citation type="journal article" date="1994" name="Gene">
        <title>Sequence of a bovine c-kit proto-oncogene cDNA.</title>
        <authorList>
            <person name="Kubota T."/>
            <person name="Hikono H."/>
            <person name="Sasaki E."/>
            <person name="Sakurai M."/>
        </authorList>
    </citation>
    <scope>NUCLEOTIDE SEQUENCE [MRNA]</scope>
</reference>
<name>KIT_BOVIN</name>
<keyword id="KW-0067">ATP-binding</keyword>
<keyword id="KW-1003">Cell membrane</keyword>
<keyword id="KW-1015">Disulfide bond</keyword>
<keyword id="KW-0325">Glycoprotein</keyword>
<keyword id="KW-0393">Immunoglobulin domain</keyword>
<keyword id="KW-0418">Kinase</keyword>
<keyword id="KW-0460">Magnesium</keyword>
<keyword id="KW-0472">Membrane</keyword>
<keyword id="KW-0479">Metal-binding</keyword>
<keyword id="KW-0547">Nucleotide-binding</keyword>
<keyword id="KW-0597">Phosphoprotein</keyword>
<keyword id="KW-0656">Proto-oncogene</keyword>
<keyword id="KW-0675">Receptor</keyword>
<keyword id="KW-1185">Reference proteome</keyword>
<keyword id="KW-0677">Repeat</keyword>
<keyword id="KW-0732">Signal</keyword>
<keyword id="KW-0808">Transferase</keyword>
<keyword id="KW-0812">Transmembrane</keyword>
<keyword id="KW-1133">Transmembrane helix</keyword>
<keyword id="KW-0829">Tyrosine-protein kinase</keyword>
<keyword id="KW-0832">Ubl conjugation</keyword>
<accession>P43481</accession>
<gene>
    <name type="primary">KIT</name>
</gene>
<protein>
    <recommendedName>
        <fullName>Mast/stem cell growth factor receptor Kit</fullName>
        <shortName>SCFR</shortName>
        <ecNumber>2.7.10.1</ecNumber>
    </recommendedName>
    <alternativeName>
        <fullName>Proto-oncogene c-Kit</fullName>
    </alternativeName>
    <alternativeName>
        <fullName>Tyrosine-protein kinase Kit</fullName>
    </alternativeName>
    <cdAntigenName>CD117</cdAntigenName>
</protein>
<comment type="function">
    <text evidence="1">Tyrosine-protein kinase that acts as a cell-surface receptor for the cytokine KITLG/SCF and plays an essential role in the regulation of cell survival and proliferation, hematopoiesis, stem cell maintenance, gametogenesis, mast cell development, migration and function, and in melanogenesis. In response to KITLG/SCF binding, KIT can activate several signaling pathways. Phosphorylates PIK3R1, PLCG1, SH2B2/APS and CBL. Activates the AKT1 signaling pathway by phosphorylation of PIK3R1, the regulatory subunit of phosphatidylinositol 3-kinase. Activated KIT also transmits signals via GRB2 and activation of RAS, RAF1 and the MAP kinases MAPK1/ERK2 and/or MAPK3/ERK1. Promotes activation of STAT family members STAT1, STAT3, STAT5A and STAT5B. Activation of PLCG1 leads to the production of the cellular signaling molecules diacylglycerol and inositol 1,4,5-trisphosphate. KIT signaling is modulated by protein phosphatases, and by rapid internalization and degradation of the receptor. Activated KIT promotes phosphorylation of the protein phosphatases PTPN6/SHP-1 and PTPRU, and of the transcription factors STAT1, STAT3, STAT5A and STAT5B. Promotes phosphorylation of PIK3R1, CBL, CRK (isoform Crk-II), LYN, MAPK1/ERK2 and/or MAPK3/ERK1, PLCG1, SRC and SHC1 (By similarity).</text>
</comment>
<comment type="catalytic activity">
    <reaction evidence="7">
        <text>L-tyrosyl-[protein] + ATP = O-phospho-L-tyrosyl-[protein] + ADP + H(+)</text>
        <dbReference type="Rhea" id="RHEA:10596"/>
        <dbReference type="Rhea" id="RHEA-COMP:10136"/>
        <dbReference type="Rhea" id="RHEA-COMP:20101"/>
        <dbReference type="ChEBI" id="CHEBI:15378"/>
        <dbReference type="ChEBI" id="CHEBI:30616"/>
        <dbReference type="ChEBI" id="CHEBI:46858"/>
        <dbReference type="ChEBI" id="CHEBI:61978"/>
        <dbReference type="ChEBI" id="CHEBI:456216"/>
        <dbReference type="EC" id="2.7.10.1"/>
    </reaction>
</comment>
<comment type="activity regulation">
    <text evidence="1">Present in an inactive conformation in the absence of bound ligand. KITLG/SCF binding leads to dimerization and activation by autophosphorylation on tyrosine residues. Activity is down-regulated by PRKCA-mediated phosphorylation on serine residues (By similarity).</text>
</comment>
<comment type="subunit">
    <text evidence="2 3">Monomer in the absence of bound KITLG/SCF. Homodimer in the presence of bound KITLG/SCF, forming a heterotetramer with two KITLG/SCF molecules. Interacts (via phosphorylated tyrosine residues) with the adapter proteins GRB2 and GRB7 (via SH2 domain), and SH2B2/APS. Interacts (via C-terminus) with MPDZ (via the tenth PDZ domain). Interacts (via phosphorylated tyrosine residues) with PIK3R1 and PIK3CD. Interacts (via phosphorylated tyrosine) with CRK (isoform Crk-II), FYN, SHC1 and MATK/CHK (via SH2 domain). Interacts with LYN and FES/FPS. Interacts (via phosphorylated tyrosine residues) with the protein phosphatases PTPN6/SHP-1 (via SH2 domain), PTPN11/SHP-2 (via SH2 domain) and PTPRU. Interacts with PLCG1. Interacts with DOK1 and TEC. Interacts with IL1RAP (independent of stimulation with KITLG/SCF). A mast cell-specific KITLG/SCF-induced interleukin-33 signaling complex contains IL1RL1, IL1RAP, KIT and MYD88 (By similarity).</text>
</comment>
<comment type="subcellular location">
    <subcellularLocation>
        <location>Cell membrane</location>
        <topology>Single-pass type I membrane protein</topology>
    </subcellularLocation>
</comment>
<comment type="PTM">
    <text evidence="1">Ubiquitinated by SOCS6. KIT is rapidly ubiquitinated after autophosphorylation induced by KITLG/SCF binding, leading to internalization and degradation (By similarity).</text>
</comment>
<comment type="PTM">
    <text evidence="1">Autophosphorylated on tyrosine residues. KITLG/SCF binding promotes autophosphorylation. Phosphorylated tyrosine residues are important for interaction with specific binding partners (By similarity).</text>
</comment>
<comment type="miscellaneous">
    <text evidence="1">Numerous proteins are phosphorylated in response to KIT signaling, but it is not evident to determine which are directly phosphorylated by KIT under in vivo conditions.</text>
</comment>
<comment type="similarity">
    <text evidence="6">Belongs to the protein kinase superfamily. Tyr protein kinase family. CSF-1/PDGF receptor subfamily.</text>
</comment>
<organism>
    <name type="scientific">Bos taurus</name>
    <name type="common">Bovine</name>
    <dbReference type="NCBI Taxonomy" id="9913"/>
    <lineage>
        <taxon>Eukaryota</taxon>
        <taxon>Metazoa</taxon>
        <taxon>Chordata</taxon>
        <taxon>Craniata</taxon>
        <taxon>Vertebrata</taxon>
        <taxon>Euteleostomi</taxon>
        <taxon>Mammalia</taxon>
        <taxon>Eutheria</taxon>
        <taxon>Laurasiatheria</taxon>
        <taxon>Artiodactyla</taxon>
        <taxon>Ruminantia</taxon>
        <taxon>Pecora</taxon>
        <taxon>Bovidae</taxon>
        <taxon>Bovinae</taxon>
        <taxon>Bos</taxon>
    </lineage>
</organism>